<gene>
    <name evidence="1" type="primary">aroC</name>
    <name type="ordered locus">Clos_1357</name>
</gene>
<accession>A8MH14</accession>
<sequence length="384" mass="42764">MLRYLSAGESHGKGLIAIIEGLPSNIPMDINRINADLGRRQQGFGRGNRMKIEKDRVEILSGVRDGKTLGTPLTLMIENLDYKNWTSIMSVEKLEKQNIIVEPRPGHGDLVGSLKYNHKDIRNVIERTSARDTAIRTAIGAVVKQFLSIFDIEILSHVISIGRAHYVPFVEDLFQYKSQIEASPVRCLNPTIEERMMGEIQRAKETGDSLGGVFEVIVRNVPIGIGSYAHFDRKLDGILAQGLMSLQAIKAVEIGNGIEGSSKMGSQFHDEIKYSEAKGYYHDTNRAGGIEAGVSNGEDILIRGYMKPIPTLMKPLKTVDMGTKEVKEAIIERSDNCAVPSAAVVAEGICAFAIAKEFLEKFRGDSIEEVEWNYERYMNYLRSR</sequence>
<protein>
    <recommendedName>
        <fullName evidence="1">Chorismate synthase</fullName>
        <shortName evidence="1">CS</shortName>
        <ecNumber evidence="1">4.2.3.5</ecNumber>
    </recommendedName>
    <alternativeName>
        <fullName evidence="1">5-enolpyruvylshikimate-3-phosphate phospholyase</fullName>
    </alternativeName>
</protein>
<feature type="chain" id="PRO_0000322385" description="Chorismate synthase">
    <location>
        <begin position="1"/>
        <end position="384"/>
    </location>
</feature>
<feature type="binding site" evidence="1">
    <location>
        <position position="40"/>
    </location>
    <ligand>
        <name>NADP(+)</name>
        <dbReference type="ChEBI" id="CHEBI:58349"/>
    </ligand>
</feature>
<feature type="binding site" evidence="1">
    <location>
        <position position="46"/>
    </location>
    <ligand>
        <name>NADP(+)</name>
        <dbReference type="ChEBI" id="CHEBI:58349"/>
    </ligand>
</feature>
<feature type="binding site" evidence="1">
    <location>
        <begin position="127"/>
        <end position="129"/>
    </location>
    <ligand>
        <name>FMN</name>
        <dbReference type="ChEBI" id="CHEBI:58210"/>
    </ligand>
</feature>
<feature type="binding site" evidence="1">
    <location>
        <begin position="247"/>
        <end position="248"/>
    </location>
    <ligand>
        <name>FMN</name>
        <dbReference type="ChEBI" id="CHEBI:58210"/>
    </ligand>
</feature>
<feature type="binding site" evidence="1">
    <location>
        <position position="292"/>
    </location>
    <ligand>
        <name>FMN</name>
        <dbReference type="ChEBI" id="CHEBI:58210"/>
    </ligand>
</feature>
<feature type="binding site" evidence="1">
    <location>
        <begin position="307"/>
        <end position="311"/>
    </location>
    <ligand>
        <name>FMN</name>
        <dbReference type="ChEBI" id="CHEBI:58210"/>
    </ligand>
</feature>
<feature type="binding site" evidence="1">
    <location>
        <position position="333"/>
    </location>
    <ligand>
        <name>FMN</name>
        <dbReference type="ChEBI" id="CHEBI:58210"/>
    </ligand>
</feature>
<proteinExistence type="inferred from homology"/>
<comment type="function">
    <text evidence="1">Catalyzes the anti-1,4-elimination of the C-3 phosphate and the C-6 proR hydrogen from 5-enolpyruvylshikimate-3-phosphate (EPSP) to yield chorismate, which is the branch point compound that serves as the starting substrate for the three terminal pathways of aromatic amino acid biosynthesis. This reaction introduces a second double bond into the aromatic ring system.</text>
</comment>
<comment type="catalytic activity">
    <reaction evidence="1">
        <text>5-O-(1-carboxyvinyl)-3-phosphoshikimate = chorismate + phosphate</text>
        <dbReference type="Rhea" id="RHEA:21020"/>
        <dbReference type="ChEBI" id="CHEBI:29748"/>
        <dbReference type="ChEBI" id="CHEBI:43474"/>
        <dbReference type="ChEBI" id="CHEBI:57701"/>
        <dbReference type="EC" id="4.2.3.5"/>
    </reaction>
</comment>
<comment type="cofactor">
    <cofactor evidence="1">
        <name>FMNH2</name>
        <dbReference type="ChEBI" id="CHEBI:57618"/>
    </cofactor>
    <text evidence="1">Reduced FMN (FMNH(2)).</text>
</comment>
<comment type="pathway">
    <text evidence="1">Metabolic intermediate biosynthesis; chorismate biosynthesis; chorismate from D-erythrose 4-phosphate and phosphoenolpyruvate: step 7/7.</text>
</comment>
<comment type="subunit">
    <text evidence="1">Homotetramer.</text>
</comment>
<comment type="similarity">
    <text evidence="1">Belongs to the chorismate synthase family.</text>
</comment>
<reference key="1">
    <citation type="submission" date="2007-10" db="EMBL/GenBank/DDBJ databases">
        <title>Complete genome of Alkaliphilus oremlandii OhILAs.</title>
        <authorList>
            <person name="Copeland A."/>
            <person name="Lucas S."/>
            <person name="Lapidus A."/>
            <person name="Barry K."/>
            <person name="Detter J.C."/>
            <person name="Glavina del Rio T."/>
            <person name="Hammon N."/>
            <person name="Israni S."/>
            <person name="Dalin E."/>
            <person name="Tice H."/>
            <person name="Pitluck S."/>
            <person name="Chain P."/>
            <person name="Malfatti S."/>
            <person name="Shin M."/>
            <person name="Vergez L."/>
            <person name="Schmutz J."/>
            <person name="Larimer F."/>
            <person name="Land M."/>
            <person name="Hauser L."/>
            <person name="Kyrpides N."/>
            <person name="Mikhailova N."/>
            <person name="Stolz J.F."/>
            <person name="Dawson A."/>
            <person name="Fisher E."/>
            <person name="Crable B."/>
            <person name="Perera E."/>
            <person name="Lisak J."/>
            <person name="Ranganathan M."/>
            <person name="Basu P."/>
            <person name="Richardson P."/>
        </authorList>
    </citation>
    <scope>NUCLEOTIDE SEQUENCE [LARGE SCALE GENOMIC DNA]</scope>
    <source>
        <strain>OhILAs</strain>
    </source>
</reference>
<keyword id="KW-0028">Amino-acid biosynthesis</keyword>
<keyword id="KW-0057">Aromatic amino acid biosynthesis</keyword>
<keyword id="KW-0274">FAD</keyword>
<keyword id="KW-0285">Flavoprotein</keyword>
<keyword id="KW-0288">FMN</keyword>
<keyword id="KW-0456">Lyase</keyword>
<keyword id="KW-0521">NADP</keyword>
<keyword id="KW-1185">Reference proteome</keyword>
<dbReference type="EC" id="4.2.3.5" evidence="1"/>
<dbReference type="EMBL" id="CP000853">
    <property type="protein sequence ID" value="ABW18901.1"/>
    <property type="molecule type" value="Genomic_DNA"/>
</dbReference>
<dbReference type="RefSeq" id="WP_012159213.1">
    <property type="nucleotide sequence ID" value="NC_009922.1"/>
</dbReference>
<dbReference type="SMR" id="A8MH14"/>
<dbReference type="STRING" id="350688.Clos_1357"/>
<dbReference type="KEGG" id="aoe:Clos_1357"/>
<dbReference type="eggNOG" id="COG0082">
    <property type="taxonomic scope" value="Bacteria"/>
</dbReference>
<dbReference type="HOGENOM" id="CLU_034547_2_0_9"/>
<dbReference type="OrthoDB" id="9771806at2"/>
<dbReference type="UniPathway" id="UPA00053">
    <property type="reaction ID" value="UER00090"/>
</dbReference>
<dbReference type="Proteomes" id="UP000000269">
    <property type="component" value="Chromosome"/>
</dbReference>
<dbReference type="GO" id="GO:0005829">
    <property type="term" value="C:cytosol"/>
    <property type="evidence" value="ECO:0007669"/>
    <property type="project" value="TreeGrafter"/>
</dbReference>
<dbReference type="GO" id="GO:0004107">
    <property type="term" value="F:chorismate synthase activity"/>
    <property type="evidence" value="ECO:0007669"/>
    <property type="project" value="UniProtKB-UniRule"/>
</dbReference>
<dbReference type="GO" id="GO:0010181">
    <property type="term" value="F:FMN binding"/>
    <property type="evidence" value="ECO:0007669"/>
    <property type="project" value="TreeGrafter"/>
</dbReference>
<dbReference type="GO" id="GO:0008652">
    <property type="term" value="P:amino acid biosynthetic process"/>
    <property type="evidence" value="ECO:0007669"/>
    <property type="project" value="UniProtKB-KW"/>
</dbReference>
<dbReference type="GO" id="GO:0009073">
    <property type="term" value="P:aromatic amino acid family biosynthetic process"/>
    <property type="evidence" value="ECO:0007669"/>
    <property type="project" value="UniProtKB-KW"/>
</dbReference>
<dbReference type="GO" id="GO:0009423">
    <property type="term" value="P:chorismate biosynthetic process"/>
    <property type="evidence" value="ECO:0007669"/>
    <property type="project" value="UniProtKB-UniRule"/>
</dbReference>
<dbReference type="CDD" id="cd07304">
    <property type="entry name" value="Chorismate_synthase"/>
    <property type="match status" value="1"/>
</dbReference>
<dbReference type="FunFam" id="3.60.150.10:FF:000002">
    <property type="entry name" value="Chorismate synthase"/>
    <property type="match status" value="1"/>
</dbReference>
<dbReference type="Gene3D" id="3.60.150.10">
    <property type="entry name" value="Chorismate synthase AroC"/>
    <property type="match status" value="1"/>
</dbReference>
<dbReference type="HAMAP" id="MF_00300">
    <property type="entry name" value="Chorismate_synth"/>
    <property type="match status" value="1"/>
</dbReference>
<dbReference type="InterPro" id="IPR000453">
    <property type="entry name" value="Chorismate_synth"/>
</dbReference>
<dbReference type="InterPro" id="IPR035904">
    <property type="entry name" value="Chorismate_synth_AroC_sf"/>
</dbReference>
<dbReference type="InterPro" id="IPR020541">
    <property type="entry name" value="Chorismate_synthase_CS"/>
</dbReference>
<dbReference type="NCBIfam" id="TIGR00033">
    <property type="entry name" value="aroC"/>
    <property type="match status" value="1"/>
</dbReference>
<dbReference type="NCBIfam" id="NF003793">
    <property type="entry name" value="PRK05382.1"/>
    <property type="match status" value="1"/>
</dbReference>
<dbReference type="PANTHER" id="PTHR21085">
    <property type="entry name" value="CHORISMATE SYNTHASE"/>
    <property type="match status" value="1"/>
</dbReference>
<dbReference type="PANTHER" id="PTHR21085:SF0">
    <property type="entry name" value="CHORISMATE SYNTHASE"/>
    <property type="match status" value="1"/>
</dbReference>
<dbReference type="Pfam" id="PF01264">
    <property type="entry name" value="Chorismate_synt"/>
    <property type="match status" value="1"/>
</dbReference>
<dbReference type="PIRSF" id="PIRSF001456">
    <property type="entry name" value="Chorismate_synth"/>
    <property type="match status" value="1"/>
</dbReference>
<dbReference type="SUPFAM" id="SSF103263">
    <property type="entry name" value="Chorismate synthase, AroC"/>
    <property type="match status" value="1"/>
</dbReference>
<dbReference type="PROSITE" id="PS00787">
    <property type="entry name" value="CHORISMATE_SYNTHASE_1"/>
    <property type="match status" value="1"/>
</dbReference>
<dbReference type="PROSITE" id="PS00788">
    <property type="entry name" value="CHORISMATE_SYNTHASE_2"/>
    <property type="match status" value="1"/>
</dbReference>
<name>AROC_ALKOO</name>
<evidence type="ECO:0000255" key="1">
    <source>
        <dbReference type="HAMAP-Rule" id="MF_00300"/>
    </source>
</evidence>
<organism>
    <name type="scientific">Alkaliphilus oremlandii (strain OhILAs)</name>
    <name type="common">Clostridium oremlandii (strain OhILAs)</name>
    <dbReference type="NCBI Taxonomy" id="350688"/>
    <lineage>
        <taxon>Bacteria</taxon>
        <taxon>Bacillati</taxon>
        <taxon>Bacillota</taxon>
        <taxon>Clostridia</taxon>
        <taxon>Peptostreptococcales</taxon>
        <taxon>Natronincolaceae</taxon>
        <taxon>Alkaliphilus</taxon>
    </lineage>
</organism>